<evidence type="ECO:0000255" key="1">
    <source>
        <dbReference type="HAMAP-Rule" id="MF_04016"/>
    </source>
</evidence>
<name>MCP_EHV1B</name>
<accession>P28920</accession>
<accession>Q6DLG8</accession>
<organismHost>
    <name type="scientific">Equus caballus</name>
    <name type="common">Horse</name>
    <dbReference type="NCBI Taxonomy" id="9796"/>
</organismHost>
<sequence>MDRRSEAFKIPVPEVIPAGQILSTIEVSSHRTLFDFFKQIRSDDNGLYAAQFDVLLGTYCNTLTLVRFLELGLSVSCVCTKFPELNYVNDGTIQFEVQQPMIARDGPHPVDQPTHTYMMKHIEQRSLSAAFAIAAEALGLIGGTTLDGTQISSSLRVRAIQQLARNVQTVLDSFERGTADQLLRVLLEKAPPLTLLAPLQIYRDEGRLASRVNRAVLVSELKRRVIEDTFFLTKHERNRKELVVARLAELVNCTAPSVAVTRMTHSDTKGRPVDGVVVTTAGVRQRLLQGILTLEDMAADVPVTYGEMMITGTNLVTALVMGKAVRNLDDVAHHLLGMQRDQVRANEKLIKDYEDVPSTARVRADLVLVGDRLVFLEALEKRVYQATNVPYPLVGNLDLTFIIPLGIFKPATDRYSRHAGSFTPTPGQPDPRTYPPQTVYFFNKDGNLVQLSFDSAAGTVCHSSFLDVDSVLVAIRREPHELHCAFGAYVTLPPAGTLLDQMRRFFERWHMLMPARPRWTAEALMTIDQLLSPGNANLRLELHPAFDFFVAPADVVIPGPFDMPNVMPTVMAMPRLINGNIPLPLCPVEFRDSRGFELSVDRHRLNPATVLAVRGAFRDANYPMVFYILEAVIHGSERTFCALARLIIQCIVSYWRNTHQVAFVNNFYMIMYINAYLGNGELPEECTAIYRDLLEHVQALRRLVAEYTVPGEAVGGQGHDALNNVLLDPALLPPLIWDCDPILHRADMGRARAQELWVDGVDYAAIPWVEMAEVNFGNTGGHLVHNRPIRGENKRNPIVPHHDPEWSVLSKIYYYAVVPAFSRGNCCTMGVRYDRVYPLVQTVVIPDLGAEEIAPTSPSDPRHPLNPRHLVPNTLNILFHNARVAVDTDALLLLQEVVTNMAERTTPVLATAAPDAGTATAVTQEMRTFDGTLHHGILMMAYQRNDETLLEGTFFYPAPVNALFACPEHLGALPGLNAEVLEAARDVPPVPHFFGGNYYATVRQPVAQHAVQSRADENTLTYALMAGYFKLGPIALSHQFATGFHPGFAFTVVRQDRFLTENILFAEKASESYFMGQLQVNRHEAVGGVNFVLTQPRANVDLGVGFTAAYAAAALRTPVTDMGNLPQNLYLTRGTIPMLDGDADAYLRRVVNTGNRLGPQGPRPIFGQLMPATPAGVAHGQAAVCEFIVTPVSADLNYFRRPCNPRGRSAGPVYACDGEADAVDVMYDHTQGDPAYPSRATVNPWASQRNSYGDRLYNGKYNLNGASPVYSPCFKFFTPTEVEAKGRNMTQLIADVGASVAPSTSNTEIQFKRPHGSTDLVEDPCSLFQEAYPLLSSTDTALLRTPHIGEIGADEGHFAQYLIRDESPLKGCFPRI</sequence>
<feature type="chain" id="PRO_0000115703" description="Major capsid protein">
    <location>
        <begin position="1"/>
        <end position="1376"/>
    </location>
</feature>
<proteinExistence type="inferred from homology"/>
<dbReference type="EMBL" id="AY665713">
    <property type="protein sequence ID" value="AAT67300.1"/>
    <property type="molecule type" value="Genomic_DNA"/>
</dbReference>
<dbReference type="PIR" id="H36799">
    <property type="entry name" value="VCBED6"/>
</dbReference>
<dbReference type="SMR" id="P28920"/>
<dbReference type="KEGG" id="vg:1487526"/>
<dbReference type="Proteomes" id="UP000001189">
    <property type="component" value="Segment"/>
</dbReference>
<dbReference type="GO" id="GO:0042025">
    <property type="term" value="C:host cell nucleus"/>
    <property type="evidence" value="ECO:0007669"/>
    <property type="project" value="UniProtKB-SubCell"/>
</dbReference>
<dbReference type="GO" id="GO:0039622">
    <property type="term" value="C:T=16 icosahedral viral capsid"/>
    <property type="evidence" value="ECO:0007669"/>
    <property type="project" value="UniProtKB-KW"/>
</dbReference>
<dbReference type="GO" id="GO:0005198">
    <property type="term" value="F:structural molecule activity"/>
    <property type="evidence" value="ECO:0007669"/>
    <property type="project" value="InterPro"/>
</dbReference>
<dbReference type="HAMAP" id="MF_04016">
    <property type="entry name" value="HSV_MCP"/>
    <property type="match status" value="1"/>
</dbReference>
<dbReference type="InterPro" id="IPR000912">
    <property type="entry name" value="Herpes_MCP"/>
</dbReference>
<dbReference type="InterPro" id="IPR023233">
    <property type="entry name" value="Herpes_MCP_upper_sf"/>
</dbReference>
<dbReference type="Pfam" id="PF03122">
    <property type="entry name" value="Herpes_MCP"/>
    <property type="match status" value="1"/>
</dbReference>
<dbReference type="PRINTS" id="PR00235">
    <property type="entry name" value="HSVCAPSIDMCP"/>
</dbReference>
<dbReference type="SUPFAM" id="SSF103417">
    <property type="entry name" value="Major capsid protein VP5"/>
    <property type="match status" value="1"/>
</dbReference>
<gene>
    <name evidence="1" type="primary">MCP</name>
    <name type="ordered locus">42</name>
</gene>
<comment type="function">
    <text evidence="1">Self-assembles to form an icosahedral capsid with a T=16 symmetry, about 200 nm in diameter, and consisting of 150 hexons and 12 pentons (total of 162 capsomers). Hexons form the edges and faces of the capsid and are each composed of six MCP molecules. In contrast, one penton is found at each of the 12 vertices. Eleven of the pentons are MCP pentamers, while the last vertex is occupied by the portal complex. The capsid is surrounded by a layer of proteinaceous material designated the tegument which, in turn, is enclosed in an envelope of host cell-derived lipids containing virus-encoded glycoproteins.</text>
</comment>
<comment type="subunit">
    <text evidence="1">Homomultimer. Makes the hexons and eleven out of twelve pentons. Interacts with triplex proteins 1/TRX1 and 2/TRX2; adjacent capsomers are linked together in groups of three by triplexes, heterotrimeric complexes composed of one molecule of TRX1 and two molecules of TRX2. Interacts with scaffold protein; this interaction allows efficient MCP transport to the host nucleus. Interacts with capsid vertex component 2/CVC2. Interacts with the small capsomere-interacting protein/SCP.</text>
</comment>
<comment type="subcellular location">
    <subcellularLocation>
        <location evidence="1">Virion</location>
    </subcellularLocation>
    <subcellularLocation>
        <location evidence="1">Host nucleus</location>
    </subcellularLocation>
</comment>
<comment type="similarity">
    <text evidence="1">Belongs to the herpesviridae major capsid protein family.</text>
</comment>
<organism>
    <name type="scientific">Equine herpesvirus 1 (strain Ab4p)</name>
    <name type="common">EHV-1</name>
    <name type="synonym">Equine abortion virus</name>
    <dbReference type="NCBI Taxonomy" id="31520"/>
    <lineage>
        <taxon>Viruses</taxon>
        <taxon>Duplodnaviria</taxon>
        <taxon>Heunggongvirae</taxon>
        <taxon>Peploviricota</taxon>
        <taxon>Herviviricetes</taxon>
        <taxon>Herpesvirales</taxon>
        <taxon>Orthoherpesviridae</taxon>
        <taxon>Alphaherpesvirinae</taxon>
        <taxon>Varicellovirus</taxon>
        <taxon>Varicellovirus equidalpha1</taxon>
        <taxon>Equid alphaherpesvirus 1</taxon>
    </lineage>
</organism>
<reference key="1">
    <citation type="journal article" date="1992" name="Virology">
        <title>The DNA sequence of equine herpesvirus-1.</title>
        <authorList>
            <person name="Telford E.A.R."/>
            <person name="Watson M.S."/>
            <person name="McBride K."/>
            <person name="Davison A.J."/>
        </authorList>
    </citation>
    <scope>NUCLEOTIDE SEQUENCE [LARGE SCALE GENOMIC DNA]</scope>
</reference>
<protein>
    <recommendedName>
        <fullName evidence="1">Major capsid protein</fullName>
        <shortName evidence="1">MCP</shortName>
    </recommendedName>
</protein>
<keyword id="KW-0167">Capsid protein</keyword>
<keyword id="KW-1048">Host nucleus</keyword>
<keyword id="KW-1185">Reference proteome</keyword>
<keyword id="KW-1147">T=16 icosahedral capsid protein</keyword>
<keyword id="KW-0946">Virion</keyword>